<sequence length="914" mass="103163">MINSLLTRLFGSRNERQLRQLNSIVAKINALETELQKLSDTALQAKTTEFKQSIQDGKSLDKLLPEAFAVCREASRRVLGMRHYDVQLIGGMVLHLGKIAEMRTGEGKTLVATLPVYLNALAGKGVHVVTVNDYLARRDAAHMGRLYNWLGLSVGVVYPGMPHSDKQAAYGADITYGTNNEFGFDYLRDNMALSKADRYQRGLHYAIVDEVDSILIDEARTPLIISGPADESQDLYIRVNRIIPHLTRQENEEAEGDYWVDEKGKQVHLSEVGMERAEELLHQAGILEEGDDSLYAAQNLSVVHHLNAALRAHALYQRDVDYIVRDGEVVIVDEFTGRTLAGRRWSDGLHQAIEAKEGVPVQRENQTLASITFQNLFRIYKKLSGMTGTADTEAYEFQSIYGLEVMVIPTNRPTVRKDYPDQVFLNRSSKFNAVLEDIKDCAQRGQPVLVGTTSIEISEMLSEHLRKARVKHEVLNAKQHEREATIVANAGLPGAVTIATNMAGRGTDIVLGGSLDTVLAELDPDATEEDRFRVKTAWNRRHEAVKAAGGLHIIGTERHESRRIDNQLRGRAGRQGDPGSSRFYLSLEDSLMRIFASEWVQKVMRLMGMKEGDVIEDRRVTRQIERAQRKVEAHNFDIRKNLLDYDDVNNEQRKVVYAQRDELLDAESIKENIDSIRHEVIDALVTRFVPEHSIDEQWDLPGLQATLQSEWGLHLPLIEMLKGREEVDAERIAFLVQDAVDKHCAEREASIGAETMRALEKHVMLTVLDQGWKEHLATMDYLRQGIHLRGYAQKQPKQEYKREAFELFSEMLEHVKREVIASLARVRIRSEEEMATLEEQERRQVDTLLRQSQFQHQEAGGYGAGDEAVSLQRQPAGQGAAIAQVIRDTPKVGRNDPCPCGSGKKYKHCHGLVT</sequence>
<name>SECA_XYLFM</name>
<protein>
    <recommendedName>
        <fullName evidence="1">Protein translocase subunit SecA</fullName>
        <ecNumber evidence="1">7.4.2.8</ecNumber>
    </recommendedName>
</protein>
<dbReference type="EC" id="7.4.2.8" evidence="1"/>
<dbReference type="EMBL" id="CP000941">
    <property type="protein sequence ID" value="ACA12905.1"/>
    <property type="molecule type" value="Genomic_DNA"/>
</dbReference>
<dbReference type="RefSeq" id="WP_004084465.1">
    <property type="nucleotide sequence ID" value="NC_010513.1"/>
</dbReference>
<dbReference type="SMR" id="B0U4Y8"/>
<dbReference type="KEGG" id="xfm:Xfasm12_2039"/>
<dbReference type="HOGENOM" id="CLU_005314_3_0_6"/>
<dbReference type="GO" id="GO:0031522">
    <property type="term" value="C:cell envelope Sec protein transport complex"/>
    <property type="evidence" value="ECO:0007669"/>
    <property type="project" value="TreeGrafter"/>
</dbReference>
<dbReference type="GO" id="GO:0005829">
    <property type="term" value="C:cytosol"/>
    <property type="evidence" value="ECO:0007669"/>
    <property type="project" value="TreeGrafter"/>
</dbReference>
<dbReference type="GO" id="GO:0005886">
    <property type="term" value="C:plasma membrane"/>
    <property type="evidence" value="ECO:0007669"/>
    <property type="project" value="UniProtKB-SubCell"/>
</dbReference>
<dbReference type="GO" id="GO:0005524">
    <property type="term" value="F:ATP binding"/>
    <property type="evidence" value="ECO:0007669"/>
    <property type="project" value="UniProtKB-UniRule"/>
</dbReference>
<dbReference type="GO" id="GO:0046872">
    <property type="term" value="F:metal ion binding"/>
    <property type="evidence" value="ECO:0007669"/>
    <property type="project" value="UniProtKB-KW"/>
</dbReference>
<dbReference type="GO" id="GO:0008564">
    <property type="term" value="F:protein-exporting ATPase activity"/>
    <property type="evidence" value="ECO:0007669"/>
    <property type="project" value="UniProtKB-EC"/>
</dbReference>
<dbReference type="GO" id="GO:0065002">
    <property type="term" value="P:intracellular protein transmembrane transport"/>
    <property type="evidence" value="ECO:0007669"/>
    <property type="project" value="UniProtKB-UniRule"/>
</dbReference>
<dbReference type="GO" id="GO:0017038">
    <property type="term" value="P:protein import"/>
    <property type="evidence" value="ECO:0007669"/>
    <property type="project" value="InterPro"/>
</dbReference>
<dbReference type="GO" id="GO:0006605">
    <property type="term" value="P:protein targeting"/>
    <property type="evidence" value="ECO:0007669"/>
    <property type="project" value="UniProtKB-UniRule"/>
</dbReference>
<dbReference type="GO" id="GO:0043952">
    <property type="term" value="P:protein transport by the Sec complex"/>
    <property type="evidence" value="ECO:0007669"/>
    <property type="project" value="TreeGrafter"/>
</dbReference>
<dbReference type="CDD" id="cd17928">
    <property type="entry name" value="DEXDc_SecA"/>
    <property type="match status" value="1"/>
</dbReference>
<dbReference type="CDD" id="cd18803">
    <property type="entry name" value="SF2_C_secA"/>
    <property type="match status" value="1"/>
</dbReference>
<dbReference type="FunFam" id="3.40.50.300:FF:000113">
    <property type="entry name" value="Preprotein translocase subunit SecA"/>
    <property type="match status" value="1"/>
</dbReference>
<dbReference type="FunFam" id="3.90.1440.10:FF:000001">
    <property type="entry name" value="Preprotein translocase subunit SecA"/>
    <property type="match status" value="1"/>
</dbReference>
<dbReference type="FunFam" id="1.10.3060.10:FF:000003">
    <property type="entry name" value="Protein translocase subunit SecA"/>
    <property type="match status" value="1"/>
</dbReference>
<dbReference type="FunFam" id="3.40.50.300:FF:000334">
    <property type="entry name" value="Protein translocase subunit SecA"/>
    <property type="match status" value="1"/>
</dbReference>
<dbReference type="Gene3D" id="1.10.3060.10">
    <property type="entry name" value="Helical scaffold and wing domains of SecA"/>
    <property type="match status" value="1"/>
</dbReference>
<dbReference type="Gene3D" id="3.40.50.300">
    <property type="entry name" value="P-loop containing nucleotide triphosphate hydrolases"/>
    <property type="match status" value="2"/>
</dbReference>
<dbReference type="Gene3D" id="3.90.1440.10">
    <property type="entry name" value="SecA, preprotein cross-linking domain"/>
    <property type="match status" value="1"/>
</dbReference>
<dbReference type="HAMAP" id="MF_01382">
    <property type="entry name" value="SecA"/>
    <property type="match status" value="1"/>
</dbReference>
<dbReference type="InterPro" id="IPR014001">
    <property type="entry name" value="Helicase_ATP-bd"/>
</dbReference>
<dbReference type="InterPro" id="IPR001650">
    <property type="entry name" value="Helicase_C-like"/>
</dbReference>
<dbReference type="InterPro" id="IPR027417">
    <property type="entry name" value="P-loop_NTPase"/>
</dbReference>
<dbReference type="InterPro" id="IPR004027">
    <property type="entry name" value="SEC_C_motif"/>
</dbReference>
<dbReference type="InterPro" id="IPR000185">
    <property type="entry name" value="SecA"/>
</dbReference>
<dbReference type="InterPro" id="IPR020937">
    <property type="entry name" value="SecA_CS"/>
</dbReference>
<dbReference type="InterPro" id="IPR011115">
    <property type="entry name" value="SecA_DEAD"/>
</dbReference>
<dbReference type="InterPro" id="IPR014018">
    <property type="entry name" value="SecA_motor_DEAD"/>
</dbReference>
<dbReference type="InterPro" id="IPR011130">
    <property type="entry name" value="SecA_preprotein_X-link_dom"/>
</dbReference>
<dbReference type="InterPro" id="IPR044722">
    <property type="entry name" value="SecA_SF2_C"/>
</dbReference>
<dbReference type="InterPro" id="IPR011116">
    <property type="entry name" value="SecA_Wing/Scaffold"/>
</dbReference>
<dbReference type="InterPro" id="IPR036266">
    <property type="entry name" value="SecA_Wing/Scaffold_sf"/>
</dbReference>
<dbReference type="InterPro" id="IPR036670">
    <property type="entry name" value="SecA_X-link_sf"/>
</dbReference>
<dbReference type="NCBIfam" id="NF009538">
    <property type="entry name" value="PRK12904.1"/>
    <property type="match status" value="1"/>
</dbReference>
<dbReference type="NCBIfam" id="TIGR00963">
    <property type="entry name" value="secA"/>
    <property type="match status" value="1"/>
</dbReference>
<dbReference type="PANTHER" id="PTHR30612:SF0">
    <property type="entry name" value="CHLOROPLAST PROTEIN-TRANSPORTING ATPASE"/>
    <property type="match status" value="1"/>
</dbReference>
<dbReference type="PANTHER" id="PTHR30612">
    <property type="entry name" value="SECA INNER MEMBRANE COMPONENT OF SEC PROTEIN SECRETION SYSTEM"/>
    <property type="match status" value="1"/>
</dbReference>
<dbReference type="Pfam" id="PF21090">
    <property type="entry name" value="P-loop_SecA"/>
    <property type="match status" value="1"/>
</dbReference>
<dbReference type="Pfam" id="PF02810">
    <property type="entry name" value="SEC-C"/>
    <property type="match status" value="1"/>
</dbReference>
<dbReference type="Pfam" id="PF07517">
    <property type="entry name" value="SecA_DEAD"/>
    <property type="match status" value="1"/>
</dbReference>
<dbReference type="Pfam" id="PF01043">
    <property type="entry name" value="SecA_PP_bind"/>
    <property type="match status" value="1"/>
</dbReference>
<dbReference type="Pfam" id="PF07516">
    <property type="entry name" value="SecA_SW"/>
    <property type="match status" value="1"/>
</dbReference>
<dbReference type="PRINTS" id="PR00906">
    <property type="entry name" value="SECA"/>
</dbReference>
<dbReference type="SMART" id="SM00957">
    <property type="entry name" value="SecA_DEAD"/>
    <property type="match status" value="1"/>
</dbReference>
<dbReference type="SMART" id="SM00958">
    <property type="entry name" value="SecA_PP_bind"/>
    <property type="match status" value="1"/>
</dbReference>
<dbReference type="SUPFAM" id="SSF81886">
    <property type="entry name" value="Helical scaffold and wing domains of SecA"/>
    <property type="match status" value="1"/>
</dbReference>
<dbReference type="SUPFAM" id="SSF52540">
    <property type="entry name" value="P-loop containing nucleoside triphosphate hydrolases"/>
    <property type="match status" value="2"/>
</dbReference>
<dbReference type="SUPFAM" id="SSF81767">
    <property type="entry name" value="Pre-protein crosslinking domain of SecA"/>
    <property type="match status" value="1"/>
</dbReference>
<dbReference type="PROSITE" id="PS01312">
    <property type="entry name" value="SECA"/>
    <property type="match status" value="1"/>
</dbReference>
<dbReference type="PROSITE" id="PS51196">
    <property type="entry name" value="SECA_MOTOR_DEAD"/>
    <property type="match status" value="1"/>
</dbReference>
<feature type="chain" id="PRO_1000145080" description="Protein translocase subunit SecA">
    <location>
        <begin position="1"/>
        <end position="914"/>
    </location>
</feature>
<feature type="binding site" evidence="1">
    <location>
        <position position="87"/>
    </location>
    <ligand>
        <name>ATP</name>
        <dbReference type="ChEBI" id="CHEBI:30616"/>
    </ligand>
</feature>
<feature type="binding site" evidence="1">
    <location>
        <begin position="105"/>
        <end position="109"/>
    </location>
    <ligand>
        <name>ATP</name>
        <dbReference type="ChEBI" id="CHEBI:30616"/>
    </ligand>
</feature>
<feature type="binding site" evidence="1">
    <location>
        <position position="508"/>
    </location>
    <ligand>
        <name>ATP</name>
        <dbReference type="ChEBI" id="CHEBI:30616"/>
    </ligand>
</feature>
<feature type="binding site" evidence="1">
    <location>
        <position position="898"/>
    </location>
    <ligand>
        <name>Zn(2+)</name>
        <dbReference type="ChEBI" id="CHEBI:29105"/>
    </ligand>
</feature>
<feature type="binding site" evidence="1">
    <location>
        <position position="900"/>
    </location>
    <ligand>
        <name>Zn(2+)</name>
        <dbReference type="ChEBI" id="CHEBI:29105"/>
    </ligand>
</feature>
<feature type="binding site" evidence="1">
    <location>
        <position position="909"/>
    </location>
    <ligand>
        <name>Zn(2+)</name>
        <dbReference type="ChEBI" id="CHEBI:29105"/>
    </ligand>
</feature>
<feature type="binding site" evidence="1">
    <location>
        <position position="910"/>
    </location>
    <ligand>
        <name>Zn(2+)</name>
        <dbReference type="ChEBI" id="CHEBI:29105"/>
    </ligand>
</feature>
<comment type="function">
    <text evidence="1">Part of the Sec protein translocase complex. Interacts with the SecYEG preprotein conducting channel. Has a central role in coupling the hydrolysis of ATP to the transfer of proteins into and across the cell membrane, serving both as a receptor for the preprotein-SecB complex and as an ATP-driven molecular motor driving the stepwise translocation of polypeptide chains across the membrane.</text>
</comment>
<comment type="catalytic activity">
    <reaction evidence="1">
        <text>ATP + H2O + cellular proteinSide 1 = ADP + phosphate + cellular proteinSide 2.</text>
        <dbReference type="EC" id="7.4.2.8"/>
    </reaction>
</comment>
<comment type="cofactor">
    <cofactor evidence="1">
        <name>Zn(2+)</name>
        <dbReference type="ChEBI" id="CHEBI:29105"/>
    </cofactor>
    <text evidence="1">May bind 1 zinc ion per subunit.</text>
</comment>
<comment type="subunit">
    <text evidence="1">Monomer and homodimer. Part of the essential Sec protein translocation apparatus which comprises SecA, SecYEG and auxiliary proteins SecDF-YajC and YidC.</text>
</comment>
<comment type="subcellular location">
    <subcellularLocation>
        <location evidence="1">Cell inner membrane</location>
        <topology evidence="1">Peripheral membrane protein</topology>
        <orientation evidence="1">Cytoplasmic side</orientation>
    </subcellularLocation>
    <subcellularLocation>
        <location evidence="1">Cytoplasm</location>
    </subcellularLocation>
    <text evidence="1">Distribution is 50-50.</text>
</comment>
<comment type="similarity">
    <text evidence="1">Belongs to the SecA family.</text>
</comment>
<organism>
    <name type="scientific">Xylella fastidiosa (strain M12)</name>
    <dbReference type="NCBI Taxonomy" id="405440"/>
    <lineage>
        <taxon>Bacteria</taxon>
        <taxon>Pseudomonadati</taxon>
        <taxon>Pseudomonadota</taxon>
        <taxon>Gammaproteobacteria</taxon>
        <taxon>Lysobacterales</taxon>
        <taxon>Lysobacteraceae</taxon>
        <taxon>Xylella</taxon>
    </lineage>
</organism>
<evidence type="ECO:0000255" key="1">
    <source>
        <dbReference type="HAMAP-Rule" id="MF_01382"/>
    </source>
</evidence>
<accession>B0U4Y8</accession>
<keyword id="KW-0067">ATP-binding</keyword>
<keyword id="KW-0997">Cell inner membrane</keyword>
<keyword id="KW-1003">Cell membrane</keyword>
<keyword id="KW-0963">Cytoplasm</keyword>
<keyword id="KW-0472">Membrane</keyword>
<keyword id="KW-0479">Metal-binding</keyword>
<keyword id="KW-0547">Nucleotide-binding</keyword>
<keyword id="KW-0653">Protein transport</keyword>
<keyword id="KW-1278">Translocase</keyword>
<keyword id="KW-0811">Translocation</keyword>
<keyword id="KW-0813">Transport</keyword>
<keyword id="KW-0862">Zinc</keyword>
<gene>
    <name evidence="1" type="primary">secA</name>
    <name type="ordered locus">Xfasm12_2039</name>
</gene>
<reference key="1">
    <citation type="journal article" date="2010" name="J. Bacteriol.">
        <title>Whole genome sequences of two Xylella fastidiosa strains (M12 and M23) causing almond leaf scorch disease in California.</title>
        <authorList>
            <person name="Chen J."/>
            <person name="Xie G."/>
            <person name="Han S."/>
            <person name="Chertkov O."/>
            <person name="Sims D."/>
            <person name="Civerolo E.L."/>
        </authorList>
    </citation>
    <scope>NUCLEOTIDE SEQUENCE [LARGE SCALE GENOMIC DNA]</scope>
    <source>
        <strain>M12</strain>
    </source>
</reference>
<proteinExistence type="inferred from homology"/>